<organism>
    <name type="scientific">Zea mays</name>
    <name type="common">Maize</name>
    <dbReference type="NCBI Taxonomy" id="4577"/>
    <lineage>
        <taxon>Eukaryota</taxon>
        <taxon>Viridiplantae</taxon>
        <taxon>Streptophyta</taxon>
        <taxon>Embryophyta</taxon>
        <taxon>Tracheophyta</taxon>
        <taxon>Spermatophyta</taxon>
        <taxon>Magnoliopsida</taxon>
        <taxon>Liliopsida</taxon>
        <taxon>Poales</taxon>
        <taxon>Poaceae</taxon>
        <taxon>PACMAD clade</taxon>
        <taxon>Panicoideae</taxon>
        <taxon>Andropogonodae</taxon>
        <taxon>Andropogoneae</taxon>
        <taxon>Tripsacinae</taxon>
        <taxon>Zea</taxon>
    </lineage>
</organism>
<feature type="signal peptide" description="Or 21" evidence="1">
    <location>
        <begin position="1"/>
        <end position="18"/>
    </location>
</feature>
<feature type="propeptide" id="PRO_0000032178" evidence="3">
    <location>
        <begin position="19"/>
        <end position="86"/>
    </location>
</feature>
<feature type="chain" id="PRO_0000032179" description="Globulin-1 S allele">
    <location>
        <begin position="87"/>
        <end position="573"/>
    </location>
</feature>
<feature type="domain" description="Cupin type-1 1" evidence="1">
    <location>
        <begin position="104"/>
        <end position="262"/>
    </location>
</feature>
<feature type="domain" description="Cupin type-1 2" evidence="1">
    <location>
        <begin position="311"/>
        <end position="493"/>
    </location>
</feature>
<feature type="region of interest" description="Disordered" evidence="2">
    <location>
        <begin position="65"/>
        <end position="102"/>
    </location>
</feature>
<feature type="region of interest" description="Disordered" evidence="2">
    <location>
        <begin position="288"/>
        <end position="315"/>
    </location>
</feature>
<feature type="region of interest" description="Disordered" evidence="2">
    <location>
        <begin position="382"/>
        <end position="416"/>
    </location>
</feature>
<feature type="region of interest" description="Disordered" evidence="2">
    <location>
        <begin position="498"/>
        <end position="573"/>
    </location>
</feature>
<feature type="compositionally biased region" description="Basic and acidic residues" evidence="2">
    <location>
        <begin position="390"/>
        <end position="402"/>
    </location>
</feature>
<feature type="compositionally biased region" description="Acidic residues" evidence="2">
    <location>
        <begin position="403"/>
        <end position="413"/>
    </location>
</feature>
<feature type="compositionally biased region" description="Basic and acidic residues" evidence="2">
    <location>
        <begin position="525"/>
        <end position="542"/>
    </location>
</feature>
<feature type="compositionally biased region" description="Basic and acidic residues" evidence="2">
    <location>
        <begin position="549"/>
        <end position="561"/>
    </location>
</feature>
<feature type="glycosylation site" description="N-linked (GlcNAc...) asparagine" evidence="1">
    <location>
        <position position="349"/>
    </location>
</feature>
<reference key="1">
    <citation type="journal article" date="1989" name="Plant Physiol.">
        <title>Molecular characterization of the major maize embryo globulin encoded by the Glb1 gene.</title>
        <authorList>
            <person name="Belanger F.C."/>
            <person name="Kriz A.L."/>
        </authorList>
    </citation>
    <scope>NUCLEOTIDE SEQUENCE [MRNA]</scope>
    <source>
        <strain>cv. Va26</strain>
    </source>
</reference>
<reference key="2">
    <citation type="journal article" date="1989" name="Biochem. Genet.">
        <title>Characterization of embryo globulins encoded by the maize Glb genes.</title>
        <authorList>
            <person name="Kriz A.L."/>
        </authorList>
    </citation>
    <scope>PROTEIN SEQUENCE OF 87-100</scope>
</reference>
<sequence length="573" mass="65029">MVSARIVVLLAVLLCAAAAVASSWEDDNHHHHGGHKSGRCVRRCEDRPWHQRPRCLEQCREEEREKRQERSRHEADDRSGEGSSEDEREREQEKEEKQKDRRPYVFDRRSFRRVVRSEQGSLRVLRPFDEVSRLLRGIRDYRVAVLEANPRSFVVPSHTDAHCIGYVAEGEGVVTTIENGERRSYTIKQGHVFVAPAGAVTYLANTDGRKKLVITKILHTISVPGEFQFFFGPGGRNPESFLSSFSKSIQRAAYKTSSDRLERLFGRHGQDKGIIVRATEEQTRELRRHASEGGHGPHWPLPPFGESRGPYSLLDQRPSIANQHGQLYEADARSFHDLAEHDVSVSFANITAGSMSAPLYNTRSFKIAYVPNGKGYAEIVCPHRQSQGGESERERGKGRRSEEEEESSEEQEEVGQGYHTIRARLSPGTAFVVPAGHPFVAVASRDSNLQIVCFEVHADRNEKVFLAGADNVLQKLDRVAKALSFASKAEEVDEVLGSRREKGFLPGPKESGGHEEREQEEEEREERHGGRGERERHGREEREKEEEEREGRHGRGRREEVAETLLRMVTARM</sequence>
<protein>
    <recommendedName>
        <fullName>Globulin-1 S allele</fullName>
        <shortName>GLB1-S</shortName>
    </recommendedName>
    <alternativeName>
        <fullName>7S-like</fullName>
    </alternativeName>
</protein>
<gene>
    <name type="primary">GLB1</name>
</gene>
<comment type="PTM">
    <text>Three protein-processing steps occur in the formation of the mature protein from the primary translation product.</text>
</comment>
<comment type="polymorphism">
    <text>The three most commonly occurring GLB1 alleles have the designation L, I, and S for large, intermediate, and small proteins, respectively.</text>
</comment>
<comment type="similarity">
    <text evidence="4">Belongs to the 7S seed storage protein family.</text>
</comment>
<keyword id="KW-0903">Direct protein sequencing</keyword>
<keyword id="KW-0325">Glycoprotein</keyword>
<keyword id="KW-1185">Reference proteome</keyword>
<keyword id="KW-0708">Seed storage protein</keyword>
<keyword id="KW-0732">Signal</keyword>
<keyword id="KW-0758">Storage protein</keyword>
<accession>P15590</accession>
<evidence type="ECO:0000255" key="1"/>
<evidence type="ECO:0000256" key="2">
    <source>
        <dbReference type="SAM" id="MobiDB-lite"/>
    </source>
</evidence>
<evidence type="ECO:0000269" key="3">
    <source>
    </source>
</evidence>
<evidence type="ECO:0000305" key="4"/>
<proteinExistence type="evidence at protein level"/>
<name>GLB1_MAIZE</name>
<dbReference type="EMBL" id="M24845">
    <property type="protein sequence ID" value="AAA33467.1"/>
    <property type="molecule type" value="mRNA"/>
</dbReference>
<dbReference type="SMR" id="P15590"/>
<dbReference type="FunCoup" id="P15590">
    <property type="interactions" value="2917"/>
</dbReference>
<dbReference type="STRING" id="4577.P15590"/>
<dbReference type="GlyCosmos" id="P15590">
    <property type="glycosylation" value="1 site, No reported glycans"/>
</dbReference>
<dbReference type="PaxDb" id="4577-GRMZM2G067919_P02"/>
<dbReference type="MaizeGDB" id="30181"/>
<dbReference type="eggNOG" id="ENOG502QQEP">
    <property type="taxonomic scope" value="Eukaryota"/>
</dbReference>
<dbReference type="InParanoid" id="P15590"/>
<dbReference type="Proteomes" id="UP000007305">
    <property type="component" value="Unplaced"/>
</dbReference>
<dbReference type="ExpressionAtlas" id="P15590">
    <property type="expression patterns" value="baseline and differential"/>
</dbReference>
<dbReference type="GO" id="GO:0045735">
    <property type="term" value="F:nutrient reservoir activity"/>
    <property type="evidence" value="ECO:0007669"/>
    <property type="project" value="UniProtKB-KW"/>
</dbReference>
<dbReference type="CDD" id="cd02245">
    <property type="entry name" value="cupin_7S_vicilin-like_C"/>
    <property type="match status" value="1"/>
</dbReference>
<dbReference type="CDD" id="cd02244">
    <property type="entry name" value="cupin_7S_vicilin-like_N"/>
    <property type="match status" value="1"/>
</dbReference>
<dbReference type="FunFam" id="2.60.120.10:FF:000173">
    <property type="entry name" value="Vicilin-like antimicrobial peptides 2-3"/>
    <property type="match status" value="1"/>
</dbReference>
<dbReference type="Gene3D" id="2.60.120.10">
    <property type="entry name" value="Jelly Rolls"/>
    <property type="match status" value="2"/>
</dbReference>
<dbReference type="InterPro" id="IPR006045">
    <property type="entry name" value="Cupin_1"/>
</dbReference>
<dbReference type="InterPro" id="IPR014710">
    <property type="entry name" value="RmlC-like_jellyroll"/>
</dbReference>
<dbReference type="InterPro" id="IPR011051">
    <property type="entry name" value="RmlC_Cupin_sf"/>
</dbReference>
<dbReference type="InterPro" id="IPR050253">
    <property type="entry name" value="Seed_Storage-Functional"/>
</dbReference>
<dbReference type="PANTHER" id="PTHR31189:SF79">
    <property type="entry name" value="63 KDA GLOBULIN-LIKE PROTEIN"/>
    <property type="match status" value="1"/>
</dbReference>
<dbReference type="PANTHER" id="PTHR31189">
    <property type="entry name" value="OS03G0336100 PROTEIN-RELATED"/>
    <property type="match status" value="1"/>
</dbReference>
<dbReference type="Pfam" id="PF00190">
    <property type="entry name" value="Cupin_1"/>
    <property type="match status" value="2"/>
</dbReference>
<dbReference type="SMART" id="SM00835">
    <property type="entry name" value="Cupin_1"/>
    <property type="match status" value="2"/>
</dbReference>
<dbReference type="SUPFAM" id="SSF51182">
    <property type="entry name" value="RmlC-like cupins"/>
    <property type="match status" value="2"/>
</dbReference>